<keyword id="KW-0025">Alternative splicing</keyword>
<keyword id="KW-0040">ANK repeat</keyword>
<keyword id="KW-0175">Coiled coil</keyword>
<keyword id="KW-1267">Proteomics identification</keyword>
<keyword id="KW-1185">Reference proteome</keyword>
<keyword id="KW-0677">Repeat</keyword>
<dbReference type="EMBL" id="AK057853">
    <property type="protein sequence ID" value="BAB71597.1"/>
    <property type="status" value="ALT_INIT"/>
    <property type="molecule type" value="mRNA"/>
</dbReference>
<dbReference type="EMBL" id="AK091120">
    <property type="protein sequence ID" value="BAC03587.1"/>
    <property type="molecule type" value="mRNA"/>
</dbReference>
<dbReference type="EMBL" id="AK296861">
    <property type="protein sequence ID" value="BAG59424.1"/>
    <property type="molecule type" value="mRNA"/>
</dbReference>
<dbReference type="EMBL" id="AL160282">
    <property type="status" value="NOT_ANNOTATED_CDS"/>
    <property type="molecule type" value="Genomic_DNA"/>
</dbReference>
<dbReference type="EMBL" id="BC101618">
    <property type="protein sequence ID" value="AAI01619.1"/>
    <property type="molecule type" value="mRNA"/>
</dbReference>
<dbReference type="EMBL" id="BC101620">
    <property type="protein sequence ID" value="AAI01621.1"/>
    <property type="molecule type" value="mRNA"/>
</dbReference>
<dbReference type="CCDS" id="CCDS72867.1">
    <molecule id="Q8N283-1"/>
</dbReference>
<dbReference type="RefSeq" id="NP_653299.4">
    <molecule id="Q8N283-1"/>
    <property type="nucleotide sequence ID" value="NM_144698.4"/>
</dbReference>
<dbReference type="SMR" id="Q8N283"/>
<dbReference type="BioGRID" id="127165">
    <property type="interactions" value="27"/>
</dbReference>
<dbReference type="FunCoup" id="Q8N283">
    <property type="interactions" value="4"/>
</dbReference>
<dbReference type="IntAct" id="Q8N283">
    <property type="interactions" value="11"/>
</dbReference>
<dbReference type="MINT" id="Q8N283"/>
<dbReference type="STRING" id="9606.ENSP00000347802"/>
<dbReference type="GlyGen" id="Q8N283">
    <property type="glycosylation" value="4 sites, 1 O-linked glycan (4 sites)"/>
</dbReference>
<dbReference type="iPTMnet" id="Q8N283"/>
<dbReference type="PhosphoSitePlus" id="Q8N283"/>
<dbReference type="BioMuta" id="ANKRD35"/>
<dbReference type="DMDM" id="109940222"/>
<dbReference type="jPOST" id="Q8N283"/>
<dbReference type="MassIVE" id="Q8N283"/>
<dbReference type="PaxDb" id="9606-ENSP00000347802"/>
<dbReference type="PeptideAtlas" id="Q8N283"/>
<dbReference type="ProteomicsDB" id="71667">
    <molecule id="Q8N283-1"/>
</dbReference>
<dbReference type="Pumba" id="Q8N283"/>
<dbReference type="Antibodypedia" id="49637">
    <property type="antibodies" value="12 antibodies from 7 providers"/>
</dbReference>
<dbReference type="DNASU" id="148741"/>
<dbReference type="Ensembl" id="ENST00000355594.9">
    <molecule id="Q8N283-1"/>
    <property type="protein sequence ID" value="ENSP00000347802.4"/>
    <property type="gene ID" value="ENSG00000198483.13"/>
</dbReference>
<dbReference type="GeneID" id="148741"/>
<dbReference type="KEGG" id="hsa:148741"/>
<dbReference type="MANE-Select" id="ENST00000355594.9">
    <property type="protein sequence ID" value="ENSP00000347802.4"/>
    <property type="RefSeq nucleotide sequence ID" value="NM_144698.5"/>
    <property type="RefSeq protein sequence ID" value="NP_653299.4"/>
</dbReference>
<dbReference type="UCSC" id="uc001eob.2">
    <molecule id="Q8N283-1"/>
    <property type="organism name" value="human"/>
</dbReference>
<dbReference type="AGR" id="HGNC:26323"/>
<dbReference type="CTD" id="148741"/>
<dbReference type="DisGeNET" id="148741"/>
<dbReference type="GeneCards" id="ANKRD35"/>
<dbReference type="HGNC" id="HGNC:26323">
    <property type="gene designation" value="ANKRD35"/>
</dbReference>
<dbReference type="HPA" id="ENSG00000198483">
    <property type="expression patterns" value="Tissue enhanced (skin)"/>
</dbReference>
<dbReference type="neXtProt" id="NX_Q8N283"/>
<dbReference type="OpenTargets" id="ENSG00000198483"/>
<dbReference type="PharmGKB" id="PA134896362"/>
<dbReference type="VEuPathDB" id="HostDB:ENSG00000198483"/>
<dbReference type="eggNOG" id="ENOG502QXWS">
    <property type="taxonomic scope" value="Eukaryota"/>
</dbReference>
<dbReference type="GeneTree" id="ENSGT00530000063074"/>
<dbReference type="HOGENOM" id="CLU_298955_0_0_1"/>
<dbReference type="InParanoid" id="Q8N283"/>
<dbReference type="OMA" id="QVAVESW"/>
<dbReference type="OrthoDB" id="341259at2759"/>
<dbReference type="PAN-GO" id="Q8N283">
    <property type="GO annotations" value="0 GO annotations based on evolutionary models"/>
</dbReference>
<dbReference type="PhylomeDB" id="Q8N283"/>
<dbReference type="TreeFam" id="TF331274"/>
<dbReference type="PathwayCommons" id="Q8N283"/>
<dbReference type="SignaLink" id="Q8N283"/>
<dbReference type="BioGRID-ORCS" id="148741">
    <property type="hits" value="18 hits in 1155 CRISPR screens"/>
</dbReference>
<dbReference type="ChiTaRS" id="ANKRD35">
    <property type="organism name" value="human"/>
</dbReference>
<dbReference type="GenomeRNAi" id="148741"/>
<dbReference type="Pharos" id="Q8N283">
    <property type="development level" value="Tdark"/>
</dbReference>
<dbReference type="PRO" id="PR:Q8N283"/>
<dbReference type="Proteomes" id="UP000005640">
    <property type="component" value="Chromosome 1"/>
</dbReference>
<dbReference type="RNAct" id="Q8N283">
    <property type="molecule type" value="protein"/>
</dbReference>
<dbReference type="Bgee" id="ENSG00000198483">
    <property type="expression patterns" value="Expressed in upper arm skin and 185 other cell types or tissues"/>
</dbReference>
<dbReference type="ExpressionAtlas" id="Q8N283">
    <property type="expression patterns" value="baseline and differential"/>
</dbReference>
<dbReference type="GO" id="GO:0003779">
    <property type="term" value="F:actin binding"/>
    <property type="evidence" value="ECO:0007669"/>
    <property type="project" value="InterPro"/>
</dbReference>
<dbReference type="Gene3D" id="1.10.287.1490">
    <property type="match status" value="1"/>
</dbReference>
<dbReference type="Gene3D" id="1.25.40.20">
    <property type="entry name" value="Ankyrin repeat-containing domain"/>
    <property type="match status" value="2"/>
</dbReference>
<dbReference type="InterPro" id="IPR002110">
    <property type="entry name" value="Ankyrin_rpt"/>
</dbReference>
<dbReference type="InterPro" id="IPR036770">
    <property type="entry name" value="Ankyrin_rpt-contain_sf"/>
</dbReference>
<dbReference type="InterPro" id="IPR042420">
    <property type="entry name" value="RAI14/UACA"/>
</dbReference>
<dbReference type="PANTHER" id="PTHR24129">
    <property type="entry name" value="ANKYCORBIN"/>
    <property type="match status" value="1"/>
</dbReference>
<dbReference type="PANTHER" id="PTHR24129:SF2">
    <property type="entry name" value="DUF3447 DOMAIN-CONTAINING PROTEIN"/>
    <property type="match status" value="1"/>
</dbReference>
<dbReference type="Pfam" id="PF12796">
    <property type="entry name" value="Ank_2"/>
    <property type="match status" value="2"/>
</dbReference>
<dbReference type="PRINTS" id="PR01415">
    <property type="entry name" value="ANKYRIN"/>
</dbReference>
<dbReference type="SMART" id="SM00248">
    <property type="entry name" value="ANK"/>
    <property type="match status" value="5"/>
</dbReference>
<dbReference type="SUPFAM" id="SSF48403">
    <property type="entry name" value="Ankyrin repeat"/>
    <property type="match status" value="1"/>
</dbReference>
<dbReference type="PROSITE" id="PS50297">
    <property type="entry name" value="ANK_REP_REGION"/>
    <property type="match status" value="1"/>
</dbReference>
<dbReference type="PROSITE" id="PS50088">
    <property type="entry name" value="ANK_REPEAT"/>
    <property type="match status" value="5"/>
</dbReference>
<protein>
    <recommendedName>
        <fullName>Ankyrin repeat domain-containing protein 35</fullName>
    </recommendedName>
</protein>
<gene>
    <name type="primary">ANKRD35</name>
</gene>
<accession>Q8N283</accession>
<accession>A6NEU0</accession>
<accession>B4DL62</accession>
<accession>Q3MJ10</accession>
<accession>Q96LS3</accession>
<feature type="chain" id="PRO_0000243910" description="Ankyrin repeat domain-containing protein 35">
    <location>
        <begin position="1"/>
        <end position="1001"/>
    </location>
</feature>
<feature type="repeat" description="ANK 1">
    <location>
        <begin position="53"/>
        <end position="82"/>
    </location>
</feature>
<feature type="repeat" description="ANK 2">
    <location>
        <begin position="86"/>
        <end position="115"/>
    </location>
</feature>
<feature type="repeat" description="ANK 3">
    <location>
        <begin position="119"/>
        <end position="148"/>
    </location>
</feature>
<feature type="repeat" description="ANK 4">
    <location>
        <begin position="152"/>
        <end position="181"/>
    </location>
</feature>
<feature type="repeat" description="ANK 5">
    <location>
        <begin position="185"/>
        <end position="214"/>
    </location>
</feature>
<feature type="repeat" description="ANK 6">
    <location>
        <begin position="218"/>
        <end position="247"/>
    </location>
</feature>
<feature type="region of interest" description="Disordered" evidence="2">
    <location>
        <begin position="256"/>
        <end position="296"/>
    </location>
</feature>
<feature type="region of interest" description="Disordered" evidence="2">
    <location>
        <begin position="352"/>
        <end position="482"/>
    </location>
</feature>
<feature type="region of interest" description="Disordered" evidence="2">
    <location>
        <begin position="559"/>
        <end position="601"/>
    </location>
</feature>
<feature type="region of interest" description="Disordered" evidence="2">
    <location>
        <begin position="879"/>
        <end position="902"/>
    </location>
</feature>
<feature type="coiled-coil region" evidence="1">
    <location>
        <begin position="295"/>
        <end position="344"/>
    </location>
</feature>
<feature type="coiled-coil region" evidence="1">
    <location>
        <begin position="610"/>
        <end position="696"/>
    </location>
</feature>
<feature type="coiled-coil region" evidence="1">
    <location>
        <begin position="733"/>
        <end position="810"/>
    </location>
</feature>
<feature type="coiled-coil region" evidence="1">
    <location>
        <begin position="851"/>
        <end position="968"/>
    </location>
</feature>
<feature type="compositionally biased region" description="Acidic residues" evidence="2">
    <location>
        <begin position="281"/>
        <end position="295"/>
    </location>
</feature>
<feature type="compositionally biased region" description="Basic and acidic residues" evidence="2">
    <location>
        <begin position="402"/>
        <end position="422"/>
    </location>
</feature>
<feature type="compositionally biased region" description="Low complexity" evidence="2">
    <location>
        <begin position="423"/>
        <end position="434"/>
    </location>
</feature>
<feature type="compositionally biased region" description="Polar residues" evidence="2">
    <location>
        <begin position="440"/>
        <end position="450"/>
    </location>
</feature>
<feature type="compositionally biased region" description="Basic and acidic residues" evidence="2">
    <location>
        <begin position="579"/>
        <end position="588"/>
    </location>
</feature>
<feature type="compositionally biased region" description="Basic and acidic residues" evidence="2">
    <location>
        <begin position="890"/>
        <end position="902"/>
    </location>
</feature>
<feature type="splice variant" id="VSP_056916" description="In isoform 2." evidence="5">
    <original>HGANEDAVDAENRSPLHWAASSGCASSVL</original>
    <variation>PPLAVPQVCSCCVTTKPSWTCWIMMDVHP</variation>
    <location>
        <begin position="109"/>
        <end position="137"/>
    </location>
</feature>
<feature type="splice variant" id="VSP_056917" description="In isoform 2." evidence="5">
    <location>
        <begin position="138"/>
        <end position="1001"/>
    </location>
</feature>
<feature type="sequence variant" id="VAR_048278" description="In dbSNP:rs6658371.">
    <original>N</original>
    <variation>K</variation>
    <location>
        <position position="53"/>
    </location>
</feature>
<feature type="sequence variant" id="VAR_026870" description="In dbSNP:rs6670984." evidence="3 4">
    <original>P</original>
    <variation>S</variation>
    <location>
        <position position="428"/>
    </location>
</feature>
<feature type="sequence variant" id="VAR_061017" description="In dbSNP:rs41315701." evidence="3">
    <original>Q</original>
    <variation>R</variation>
    <location>
        <position position="592"/>
    </location>
</feature>
<feature type="sequence variant" id="VAR_087983" description="In dbSNP:rs11579366." evidence="3 4">
    <original>Q</original>
    <variation>E</variation>
    <location>
        <position position="661"/>
    </location>
</feature>
<feature type="sequence variant" id="VAR_033506" description="In dbSNP:rs16827032.">
    <original>N</original>
    <variation>D</variation>
    <location>
        <position position="978"/>
    </location>
</feature>
<feature type="sequence conflict" description="In Ref. 1; BAB71597." evidence="6" ref="1">
    <original>S</original>
    <variation>A</variation>
    <location>
        <position position="188"/>
    </location>
</feature>
<feature type="sequence conflict" description="In Ref. 1; BAC03587." evidence="6" ref="1">
    <original>E</original>
    <variation>G</variation>
    <location>
        <position position="820"/>
    </location>
</feature>
<organism>
    <name type="scientific">Homo sapiens</name>
    <name type="common">Human</name>
    <dbReference type="NCBI Taxonomy" id="9606"/>
    <lineage>
        <taxon>Eukaryota</taxon>
        <taxon>Metazoa</taxon>
        <taxon>Chordata</taxon>
        <taxon>Craniata</taxon>
        <taxon>Vertebrata</taxon>
        <taxon>Euteleostomi</taxon>
        <taxon>Mammalia</taxon>
        <taxon>Eutheria</taxon>
        <taxon>Euarchontoglires</taxon>
        <taxon>Primates</taxon>
        <taxon>Haplorrhini</taxon>
        <taxon>Catarrhini</taxon>
        <taxon>Hominidae</taxon>
        <taxon>Homo</taxon>
    </lineage>
</organism>
<evidence type="ECO:0000255" key="1"/>
<evidence type="ECO:0000256" key="2">
    <source>
        <dbReference type="SAM" id="MobiDB-lite"/>
    </source>
</evidence>
<evidence type="ECO:0000269" key="3">
    <source>
    </source>
</evidence>
<evidence type="ECO:0000269" key="4">
    <source>
    </source>
</evidence>
<evidence type="ECO:0000303" key="5">
    <source>
    </source>
</evidence>
<evidence type="ECO:0000305" key="6"/>
<sequence length="1001" mass="109937">MKRIFSCSSTQVAVERWNRHDQKLLEAVHRGDVGRVAALASRKSARPTKLDSNGQSPFHLAASKGLTECLTILLANGADINSKNEDGSTALHLATISCQPQCVKVLLQHGANEDAVDAENRSPLHWAASSGCASSVLLLCDHEAFLDVLDNDGRTPLMIASLGGHAAICSQLLQRGARVNVTDKNDKSALILACEKGSAEVAELLLSHGADAGAVDSTGHDALHYALHTQDKALWRHLQQALSRRRRGGQRLVQHPDLASQASPSEPQAGSPPKSSWRAEPEEEQEEKEDEDPCSEEWRWKYEEERRKVVRLEQELVQKTEECKTQAAAYLDLENQIREQAQELGVLLSWEPRASGKQGSSLRPGGDGMEQGCPKDLLAESTQELKKQQQAAATVNPVLAPKKAEDSAPGKIQYEVHGRSQPEEQGPPQSPASETIRKATGQQLTTNGAQTFGPDHADQLPAGQKESSQVLGVEPGGTVAEPVGPAAMNQLLLQLREELAAVWREKDAARGALSRPVMEGALGTPRAEAAAAAWEKMEARLERVLARLEWAKAGLQVKPEVPSQESREGALKAAPGSIKQDEEKEKRVPGAQGEPLGALGGEKALGGLAKGQLEKEMSVLRLSNSNLLEELGELGRERQRLQRELQSLSQRLQREFVPKPQAQVQLQQLRQSVGLLTNELAMEKEATEKLRKLLASQSSGLRGLWDCLPADLVGERSAQSKAAESLEELRACISTLVDRHREAQQVLARLQEENQQLRGSLSPCREPGTSLKAPASPQVAALEQDLGKLEEELRAVQATMSGKSQEIGKLKQLLYQATEEVAELRAREAASLRQHEKTRGSLVAQAQAWGQELKALLEKYNTACREVGRLREAVAEERRRSGDLAAQAAEQERQASEMRGRSEQFEKTAELLKEKMEHLIGACRDKEAKIKELLKKLEQLSEEVLAIRGENARLALQLQDSQKNHEEIISTYRNHLLNAARGYMEHEVYNILLQILSMEEE</sequence>
<name>ANR35_HUMAN</name>
<comment type="alternative products">
    <event type="alternative splicing"/>
    <isoform>
        <id>Q8N283-1</id>
        <name>1</name>
        <sequence type="displayed"/>
    </isoform>
    <isoform>
        <id>Q8N283-2</id>
        <name>2</name>
        <sequence type="described" ref="VSP_056916 VSP_056917"/>
    </isoform>
</comment>
<comment type="sequence caution" evidence="6">
    <conflict type="erroneous initiation">
        <sequence resource="EMBL-CDS" id="BAB71597"/>
    </conflict>
</comment>
<reference key="1">
    <citation type="journal article" date="2004" name="Nat. Genet.">
        <title>Complete sequencing and characterization of 21,243 full-length human cDNAs.</title>
        <authorList>
            <person name="Ota T."/>
            <person name="Suzuki Y."/>
            <person name="Nishikawa T."/>
            <person name="Otsuki T."/>
            <person name="Sugiyama T."/>
            <person name="Irie R."/>
            <person name="Wakamatsu A."/>
            <person name="Hayashi K."/>
            <person name="Sato H."/>
            <person name="Nagai K."/>
            <person name="Kimura K."/>
            <person name="Makita H."/>
            <person name="Sekine M."/>
            <person name="Obayashi M."/>
            <person name="Nishi T."/>
            <person name="Shibahara T."/>
            <person name="Tanaka T."/>
            <person name="Ishii S."/>
            <person name="Yamamoto J."/>
            <person name="Saito K."/>
            <person name="Kawai Y."/>
            <person name="Isono Y."/>
            <person name="Nakamura Y."/>
            <person name="Nagahari K."/>
            <person name="Murakami K."/>
            <person name="Yasuda T."/>
            <person name="Iwayanagi T."/>
            <person name="Wagatsuma M."/>
            <person name="Shiratori A."/>
            <person name="Sudo H."/>
            <person name="Hosoiri T."/>
            <person name="Kaku Y."/>
            <person name="Kodaira H."/>
            <person name="Kondo H."/>
            <person name="Sugawara M."/>
            <person name="Takahashi M."/>
            <person name="Kanda K."/>
            <person name="Yokoi T."/>
            <person name="Furuya T."/>
            <person name="Kikkawa E."/>
            <person name="Omura Y."/>
            <person name="Abe K."/>
            <person name="Kamihara K."/>
            <person name="Katsuta N."/>
            <person name="Sato K."/>
            <person name="Tanikawa M."/>
            <person name="Yamazaki M."/>
            <person name="Ninomiya K."/>
            <person name="Ishibashi T."/>
            <person name="Yamashita H."/>
            <person name="Murakawa K."/>
            <person name="Fujimori K."/>
            <person name="Tanai H."/>
            <person name="Kimata M."/>
            <person name="Watanabe M."/>
            <person name="Hiraoka S."/>
            <person name="Chiba Y."/>
            <person name="Ishida S."/>
            <person name="Ono Y."/>
            <person name="Takiguchi S."/>
            <person name="Watanabe S."/>
            <person name="Yosida M."/>
            <person name="Hotuta T."/>
            <person name="Kusano J."/>
            <person name="Kanehori K."/>
            <person name="Takahashi-Fujii A."/>
            <person name="Hara H."/>
            <person name="Tanase T.-O."/>
            <person name="Nomura Y."/>
            <person name="Togiya S."/>
            <person name="Komai F."/>
            <person name="Hara R."/>
            <person name="Takeuchi K."/>
            <person name="Arita M."/>
            <person name="Imose N."/>
            <person name="Musashino K."/>
            <person name="Yuuki H."/>
            <person name="Oshima A."/>
            <person name="Sasaki N."/>
            <person name="Aotsuka S."/>
            <person name="Yoshikawa Y."/>
            <person name="Matsunawa H."/>
            <person name="Ichihara T."/>
            <person name="Shiohata N."/>
            <person name="Sano S."/>
            <person name="Moriya S."/>
            <person name="Momiyama H."/>
            <person name="Satoh N."/>
            <person name="Takami S."/>
            <person name="Terashima Y."/>
            <person name="Suzuki O."/>
            <person name="Nakagawa S."/>
            <person name="Senoh A."/>
            <person name="Mizoguchi H."/>
            <person name="Goto Y."/>
            <person name="Shimizu F."/>
            <person name="Wakebe H."/>
            <person name="Hishigaki H."/>
            <person name="Watanabe T."/>
            <person name="Sugiyama A."/>
            <person name="Takemoto M."/>
            <person name="Kawakami B."/>
            <person name="Yamazaki M."/>
            <person name="Watanabe K."/>
            <person name="Kumagai A."/>
            <person name="Itakura S."/>
            <person name="Fukuzumi Y."/>
            <person name="Fujimori Y."/>
            <person name="Komiyama M."/>
            <person name="Tashiro H."/>
            <person name="Tanigami A."/>
            <person name="Fujiwara T."/>
            <person name="Ono T."/>
            <person name="Yamada K."/>
            <person name="Fujii Y."/>
            <person name="Ozaki K."/>
            <person name="Hirao M."/>
            <person name="Ohmori Y."/>
            <person name="Kawabata A."/>
            <person name="Hikiji T."/>
            <person name="Kobatake N."/>
            <person name="Inagaki H."/>
            <person name="Ikema Y."/>
            <person name="Okamoto S."/>
            <person name="Okitani R."/>
            <person name="Kawakami T."/>
            <person name="Noguchi S."/>
            <person name="Itoh T."/>
            <person name="Shigeta K."/>
            <person name="Senba T."/>
            <person name="Matsumura K."/>
            <person name="Nakajima Y."/>
            <person name="Mizuno T."/>
            <person name="Morinaga M."/>
            <person name="Sasaki M."/>
            <person name="Togashi T."/>
            <person name="Oyama M."/>
            <person name="Hata H."/>
            <person name="Watanabe M."/>
            <person name="Komatsu T."/>
            <person name="Mizushima-Sugano J."/>
            <person name="Satoh T."/>
            <person name="Shirai Y."/>
            <person name="Takahashi Y."/>
            <person name="Nakagawa K."/>
            <person name="Okumura K."/>
            <person name="Nagase T."/>
            <person name="Nomura N."/>
            <person name="Kikuchi H."/>
            <person name="Masuho Y."/>
            <person name="Yamashita R."/>
            <person name="Nakai K."/>
            <person name="Yada T."/>
            <person name="Nakamura Y."/>
            <person name="Ohara O."/>
            <person name="Isogai T."/>
            <person name="Sugano S."/>
        </authorList>
    </citation>
    <scope>NUCLEOTIDE SEQUENCE [LARGE SCALE MRNA] (ISOFORM 1)</scope>
    <scope>VARIANTS SER-428; ARG-592 AND GLU-661</scope>
    <source>
        <tissue>Brain</tissue>
        <tissue>Tongue</tissue>
    </source>
</reference>
<reference key="2">
    <citation type="journal article" date="2006" name="Nature">
        <title>The DNA sequence and biological annotation of human chromosome 1.</title>
        <authorList>
            <person name="Gregory S.G."/>
            <person name="Barlow K.F."/>
            <person name="McLay K.E."/>
            <person name="Kaul R."/>
            <person name="Swarbreck D."/>
            <person name="Dunham A."/>
            <person name="Scott C.E."/>
            <person name="Howe K.L."/>
            <person name="Woodfine K."/>
            <person name="Spencer C.C.A."/>
            <person name="Jones M.C."/>
            <person name="Gillson C."/>
            <person name="Searle S."/>
            <person name="Zhou Y."/>
            <person name="Kokocinski F."/>
            <person name="McDonald L."/>
            <person name="Evans R."/>
            <person name="Phillips K."/>
            <person name="Atkinson A."/>
            <person name="Cooper R."/>
            <person name="Jones C."/>
            <person name="Hall R.E."/>
            <person name="Andrews T.D."/>
            <person name="Lloyd C."/>
            <person name="Ainscough R."/>
            <person name="Almeida J.P."/>
            <person name="Ambrose K.D."/>
            <person name="Anderson F."/>
            <person name="Andrew R.W."/>
            <person name="Ashwell R.I.S."/>
            <person name="Aubin K."/>
            <person name="Babbage A.K."/>
            <person name="Bagguley C.L."/>
            <person name="Bailey J."/>
            <person name="Beasley H."/>
            <person name="Bethel G."/>
            <person name="Bird C.P."/>
            <person name="Bray-Allen S."/>
            <person name="Brown J.Y."/>
            <person name="Brown A.J."/>
            <person name="Buckley D."/>
            <person name="Burton J."/>
            <person name="Bye J."/>
            <person name="Carder C."/>
            <person name="Chapman J.C."/>
            <person name="Clark S.Y."/>
            <person name="Clarke G."/>
            <person name="Clee C."/>
            <person name="Cobley V."/>
            <person name="Collier R.E."/>
            <person name="Corby N."/>
            <person name="Coville G.J."/>
            <person name="Davies J."/>
            <person name="Deadman R."/>
            <person name="Dunn M."/>
            <person name="Earthrowl M."/>
            <person name="Ellington A.G."/>
            <person name="Errington H."/>
            <person name="Frankish A."/>
            <person name="Frankland J."/>
            <person name="French L."/>
            <person name="Garner P."/>
            <person name="Garnett J."/>
            <person name="Gay L."/>
            <person name="Ghori M.R.J."/>
            <person name="Gibson R."/>
            <person name="Gilby L.M."/>
            <person name="Gillett W."/>
            <person name="Glithero R.J."/>
            <person name="Grafham D.V."/>
            <person name="Griffiths C."/>
            <person name="Griffiths-Jones S."/>
            <person name="Grocock R."/>
            <person name="Hammond S."/>
            <person name="Harrison E.S.I."/>
            <person name="Hart E."/>
            <person name="Haugen E."/>
            <person name="Heath P.D."/>
            <person name="Holmes S."/>
            <person name="Holt K."/>
            <person name="Howden P.J."/>
            <person name="Hunt A.R."/>
            <person name="Hunt S.E."/>
            <person name="Hunter G."/>
            <person name="Isherwood J."/>
            <person name="James R."/>
            <person name="Johnson C."/>
            <person name="Johnson D."/>
            <person name="Joy A."/>
            <person name="Kay M."/>
            <person name="Kershaw J.K."/>
            <person name="Kibukawa M."/>
            <person name="Kimberley A.M."/>
            <person name="King A."/>
            <person name="Knights A.J."/>
            <person name="Lad H."/>
            <person name="Laird G."/>
            <person name="Lawlor S."/>
            <person name="Leongamornlert D.A."/>
            <person name="Lloyd D.M."/>
            <person name="Loveland J."/>
            <person name="Lovell J."/>
            <person name="Lush M.J."/>
            <person name="Lyne R."/>
            <person name="Martin S."/>
            <person name="Mashreghi-Mohammadi M."/>
            <person name="Matthews L."/>
            <person name="Matthews N.S.W."/>
            <person name="McLaren S."/>
            <person name="Milne S."/>
            <person name="Mistry S."/>
            <person name="Moore M.J.F."/>
            <person name="Nickerson T."/>
            <person name="O'Dell C.N."/>
            <person name="Oliver K."/>
            <person name="Palmeiri A."/>
            <person name="Palmer S.A."/>
            <person name="Parker A."/>
            <person name="Patel D."/>
            <person name="Pearce A.V."/>
            <person name="Peck A.I."/>
            <person name="Pelan S."/>
            <person name="Phelps K."/>
            <person name="Phillimore B.J."/>
            <person name="Plumb R."/>
            <person name="Rajan J."/>
            <person name="Raymond C."/>
            <person name="Rouse G."/>
            <person name="Saenphimmachak C."/>
            <person name="Sehra H.K."/>
            <person name="Sheridan E."/>
            <person name="Shownkeen R."/>
            <person name="Sims S."/>
            <person name="Skuce C.D."/>
            <person name="Smith M."/>
            <person name="Steward C."/>
            <person name="Subramanian S."/>
            <person name="Sycamore N."/>
            <person name="Tracey A."/>
            <person name="Tromans A."/>
            <person name="Van Helmond Z."/>
            <person name="Wall M."/>
            <person name="Wallis J.M."/>
            <person name="White S."/>
            <person name="Whitehead S.L."/>
            <person name="Wilkinson J.E."/>
            <person name="Willey D.L."/>
            <person name="Williams H."/>
            <person name="Wilming L."/>
            <person name="Wray P.W."/>
            <person name="Wu Z."/>
            <person name="Coulson A."/>
            <person name="Vaudin M."/>
            <person name="Sulston J.E."/>
            <person name="Durbin R.M."/>
            <person name="Hubbard T."/>
            <person name="Wooster R."/>
            <person name="Dunham I."/>
            <person name="Carter N.P."/>
            <person name="McVean G."/>
            <person name="Ross M.T."/>
            <person name="Harrow J."/>
            <person name="Olson M.V."/>
            <person name="Beck S."/>
            <person name="Rogers J."/>
            <person name="Bentley D.R."/>
        </authorList>
    </citation>
    <scope>NUCLEOTIDE SEQUENCE [LARGE SCALE GENOMIC DNA]</scope>
</reference>
<reference key="3">
    <citation type="journal article" date="2004" name="Genome Res.">
        <title>The status, quality, and expansion of the NIH full-length cDNA project: the Mammalian Gene Collection (MGC).</title>
        <authorList>
            <consortium name="The MGC Project Team"/>
        </authorList>
    </citation>
    <scope>NUCLEOTIDE SEQUENCE [LARGE SCALE MRNA] (ISOFORMS 1 AND 2)</scope>
    <scope>VARIANT SER-428</scope>
    <source>
        <tissue>Heart</tissue>
        <tissue>Lung</tissue>
        <tissue>Tongue</tissue>
    </source>
</reference>
<proteinExistence type="evidence at protein level"/>